<evidence type="ECO:0000255" key="1">
    <source>
        <dbReference type="HAMAP-Rule" id="MF_00072"/>
    </source>
</evidence>
<gene>
    <name evidence="1" type="primary">prfC</name>
    <name type="ordered locus">Pmen_0792</name>
</gene>
<feature type="chain" id="PRO_1000023670" description="Peptide chain release factor 3">
    <location>
        <begin position="1"/>
        <end position="527"/>
    </location>
</feature>
<feature type="domain" description="tr-type G">
    <location>
        <begin position="9"/>
        <end position="277"/>
    </location>
</feature>
<feature type="binding site" evidence="1">
    <location>
        <begin position="18"/>
        <end position="25"/>
    </location>
    <ligand>
        <name>GTP</name>
        <dbReference type="ChEBI" id="CHEBI:37565"/>
    </ligand>
</feature>
<feature type="binding site" evidence="1">
    <location>
        <begin position="86"/>
        <end position="90"/>
    </location>
    <ligand>
        <name>GTP</name>
        <dbReference type="ChEBI" id="CHEBI:37565"/>
    </ligand>
</feature>
<feature type="binding site" evidence="1">
    <location>
        <begin position="140"/>
        <end position="143"/>
    </location>
    <ligand>
        <name>GTP</name>
        <dbReference type="ChEBI" id="CHEBI:37565"/>
    </ligand>
</feature>
<sequence length="527" mass="59755">MTTQAAEVAKRRTFAIISHPDAGKTTITEKLLLMGKAIEVAGTVKSRKSDRHATSDWMEMEKQRGISITTSVMQFPYREHIVNLLDTPGHEDFSEDTYRTLTAVDSALMVLDGGKGVEPRTIALMDVCRLRDTPIVSFINKLDRDIRDPIELLDEIEAVLKIKAAPITWPIGCYKDFKGVYHLSGDYIVVYTPGHGHERTEAKIIQKLDSDEARDHLGDMYERFVEELELVQGACHEFEPEAFLKGEMTPVFFGTALGNFGVDHVLDAVVDWAPRPLPRAANERTVEPTEEKFSGFVFKIQANMDPKHRDRIAFMRICSGKYTQGMKMRHARLGKDVRVGDALTFFSSEREHLEEAYAGDIIGLHNHGTIQIGDTFTEGENLGFTGIPHFAPELFRRVRLKDPLKSKQLRQGLQELAEEGATQVFFPERNNDIVLGAVGVLQFDVVASRLKEEYKVECAYEAINVWSARWIECSDEKKLKEFKDKAYENLAVDGGGHLTYLAPTRVNLSLMEERWPEIKFRATREHH</sequence>
<comment type="function">
    <text evidence="1">Increases the formation of ribosomal termination complexes and stimulates activities of RF-1 and RF-2. It binds guanine nucleotides and has strong preference for UGA stop codons. It may interact directly with the ribosome. The stimulation of RF-1 and RF-2 is significantly reduced by GTP and GDP, but not by GMP.</text>
</comment>
<comment type="subcellular location">
    <subcellularLocation>
        <location evidence="1">Cytoplasm</location>
    </subcellularLocation>
</comment>
<comment type="similarity">
    <text evidence="1">Belongs to the TRAFAC class translation factor GTPase superfamily. Classic translation factor GTPase family. PrfC subfamily.</text>
</comment>
<protein>
    <recommendedName>
        <fullName evidence="1">Peptide chain release factor 3</fullName>
        <shortName evidence="1">RF-3</shortName>
    </recommendedName>
</protein>
<accession>A4XQE4</accession>
<organism>
    <name type="scientific">Ectopseudomonas mendocina (strain ymp)</name>
    <name type="common">Pseudomonas mendocina</name>
    <dbReference type="NCBI Taxonomy" id="399739"/>
    <lineage>
        <taxon>Bacteria</taxon>
        <taxon>Pseudomonadati</taxon>
        <taxon>Pseudomonadota</taxon>
        <taxon>Gammaproteobacteria</taxon>
        <taxon>Pseudomonadales</taxon>
        <taxon>Pseudomonadaceae</taxon>
        <taxon>Ectopseudomonas</taxon>
    </lineage>
</organism>
<dbReference type="EMBL" id="CP000680">
    <property type="protein sequence ID" value="ABP83560.1"/>
    <property type="molecule type" value="Genomic_DNA"/>
</dbReference>
<dbReference type="SMR" id="A4XQE4"/>
<dbReference type="STRING" id="399739.Pmen_0792"/>
<dbReference type="KEGG" id="pmy:Pmen_0792"/>
<dbReference type="PATRIC" id="fig|399739.8.peg.804"/>
<dbReference type="eggNOG" id="COG4108">
    <property type="taxonomic scope" value="Bacteria"/>
</dbReference>
<dbReference type="HOGENOM" id="CLU_002794_2_1_6"/>
<dbReference type="OrthoDB" id="9801472at2"/>
<dbReference type="GO" id="GO:0005829">
    <property type="term" value="C:cytosol"/>
    <property type="evidence" value="ECO:0007669"/>
    <property type="project" value="TreeGrafter"/>
</dbReference>
<dbReference type="GO" id="GO:0005525">
    <property type="term" value="F:GTP binding"/>
    <property type="evidence" value="ECO:0007669"/>
    <property type="project" value="UniProtKB-UniRule"/>
</dbReference>
<dbReference type="GO" id="GO:0003924">
    <property type="term" value="F:GTPase activity"/>
    <property type="evidence" value="ECO:0007669"/>
    <property type="project" value="InterPro"/>
</dbReference>
<dbReference type="GO" id="GO:0097216">
    <property type="term" value="F:guanosine tetraphosphate binding"/>
    <property type="evidence" value="ECO:0007669"/>
    <property type="project" value="UniProtKB-ARBA"/>
</dbReference>
<dbReference type="GO" id="GO:0016150">
    <property type="term" value="F:translation release factor activity, codon nonspecific"/>
    <property type="evidence" value="ECO:0007669"/>
    <property type="project" value="TreeGrafter"/>
</dbReference>
<dbReference type="GO" id="GO:0016149">
    <property type="term" value="F:translation release factor activity, codon specific"/>
    <property type="evidence" value="ECO:0007669"/>
    <property type="project" value="UniProtKB-UniRule"/>
</dbReference>
<dbReference type="GO" id="GO:0006449">
    <property type="term" value="P:regulation of translational termination"/>
    <property type="evidence" value="ECO:0007669"/>
    <property type="project" value="UniProtKB-UniRule"/>
</dbReference>
<dbReference type="CDD" id="cd04169">
    <property type="entry name" value="RF3"/>
    <property type="match status" value="1"/>
</dbReference>
<dbReference type="CDD" id="cd03689">
    <property type="entry name" value="RF3_II"/>
    <property type="match status" value="1"/>
</dbReference>
<dbReference type="CDD" id="cd16259">
    <property type="entry name" value="RF3_III"/>
    <property type="match status" value="1"/>
</dbReference>
<dbReference type="FunFam" id="2.40.30.10:FF:000040">
    <property type="entry name" value="Peptide chain release factor 3"/>
    <property type="match status" value="1"/>
</dbReference>
<dbReference type="FunFam" id="3.30.70.3280:FF:000001">
    <property type="entry name" value="Peptide chain release factor 3"/>
    <property type="match status" value="1"/>
</dbReference>
<dbReference type="FunFam" id="3.40.50.300:FF:000542">
    <property type="entry name" value="Peptide chain release factor 3"/>
    <property type="match status" value="1"/>
</dbReference>
<dbReference type="Gene3D" id="3.40.50.300">
    <property type="entry name" value="P-loop containing nucleotide triphosphate hydrolases"/>
    <property type="match status" value="3"/>
</dbReference>
<dbReference type="Gene3D" id="3.30.70.3280">
    <property type="entry name" value="Peptide chain release factor 3, domain III"/>
    <property type="match status" value="1"/>
</dbReference>
<dbReference type="HAMAP" id="MF_00072">
    <property type="entry name" value="Rel_fac_3"/>
    <property type="match status" value="1"/>
</dbReference>
<dbReference type="InterPro" id="IPR053905">
    <property type="entry name" value="EF-G-like_DII"/>
</dbReference>
<dbReference type="InterPro" id="IPR035647">
    <property type="entry name" value="EFG_III/V"/>
</dbReference>
<dbReference type="InterPro" id="IPR031157">
    <property type="entry name" value="G_TR_CS"/>
</dbReference>
<dbReference type="InterPro" id="IPR027417">
    <property type="entry name" value="P-loop_NTPase"/>
</dbReference>
<dbReference type="InterPro" id="IPR004548">
    <property type="entry name" value="PrfC"/>
</dbReference>
<dbReference type="InterPro" id="IPR032090">
    <property type="entry name" value="RF3_C"/>
</dbReference>
<dbReference type="InterPro" id="IPR038467">
    <property type="entry name" value="RF3_dom_3_sf"/>
</dbReference>
<dbReference type="InterPro" id="IPR041732">
    <property type="entry name" value="RF3_GTP-bd"/>
</dbReference>
<dbReference type="InterPro" id="IPR005225">
    <property type="entry name" value="Small_GTP-bd"/>
</dbReference>
<dbReference type="InterPro" id="IPR000795">
    <property type="entry name" value="T_Tr_GTP-bd_dom"/>
</dbReference>
<dbReference type="InterPro" id="IPR009000">
    <property type="entry name" value="Transl_B-barrel_sf"/>
</dbReference>
<dbReference type="NCBIfam" id="TIGR00503">
    <property type="entry name" value="prfC"/>
    <property type="match status" value="1"/>
</dbReference>
<dbReference type="NCBIfam" id="NF001964">
    <property type="entry name" value="PRK00741.1"/>
    <property type="match status" value="1"/>
</dbReference>
<dbReference type="NCBIfam" id="TIGR00231">
    <property type="entry name" value="small_GTP"/>
    <property type="match status" value="1"/>
</dbReference>
<dbReference type="PANTHER" id="PTHR43556">
    <property type="entry name" value="PEPTIDE CHAIN RELEASE FACTOR RF3"/>
    <property type="match status" value="1"/>
</dbReference>
<dbReference type="PANTHER" id="PTHR43556:SF2">
    <property type="entry name" value="PEPTIDE CHAIN RELEASE FACTOR RF3"/>
    <property type="match status" value="1"/>
</dbReference>
<dbReference type="Pfam" id="PF22042">
    <property type="entry name" value="EF-G_D2"/>
    <property type="match status" value="1"/>
</dbReference>
<dbReference type="Pfam" id="PF00009">
    <property type="entry name" value="GTP_EFTU"/>
    <property type="match status" value="1"/>
</dbReference>
<dbReference type="Pfam" id="PF16658">
    <property type="entry name" value="RF3_C"/>
    <property type="match status" value="1"/>
</dbReference>
<dbReference type="PRINTS" id="PR00315">
    <property type="entry name" value="ELONGATNFCT"/>
</dbReference>
<dbReference type="SUPFAM" id="SSF54980">
    <property type="entry name" value="EF-G C-terminal domain-like"/>
    <property type="match status" value="1"/>
</dbReference>
<dbReference type="SUPFAM" id="SSF52540">
    <property type="entry name" value="P-loop containing nucleoside triphosphate hydrolases"/>
    <property type="match status" value="1"/>
</dbReference>
<dbReference type="SUPFAM" id="SSF50447">
    <property type="entry name" value="Translation proteins"/>
    <property type="match status" value="1"/>
</dbReference>
<dbReference type="PROSITE" id="PS00301">
    <property type="entry name" value="G_TR_1"/>
    <property type="match status" value="1"/>
</dbReference>
<dbReference type="PROSITE" id="PS51722">
    <property type="entry name" value="G_TR_2"/>
    <property type="match status" value="1"/>
</dbReference>
<name>RF3_ECTM1</name>
<reference key="1">
    <citation type="submission" date="2007-04" db="EMBL/GenBank/DDBJ databases">
        <title>Complete sequence of Pseudomonas mendocina ymp.</title>
        <authorList>
            <consortium name="US DOE Joint Genome Institute"/>
            <person name="Copeland A."/>
            <person name="Lucas S."/>
            <person name="Lapidus A."/>
            <person name="Barry K."/>
            <person name="Glavina del Rio T."/>
            <person name="Dalin E."/>
            <person name="Tice H."/>
            <person name="Pitluck S."/>
            <person name="Kiss H."/>
            <person name="Brettin T."/>
            <person name="Detter J.C."/>
            <person name="Bruce D."/>
            <person name="Han C."/>
            <person name="Schmutz J."/>
            <person name="Larimer F."/>
            <person name="Land M."/>
            <person name="Hauser L."/>
            <person name="Kyrpides N."/>
            <person name="Mikhailova N."/>
            <person name="Hersman L."/>
            <person name="Dubois J."/>
            <person name="Maurice P."/>
            <person name="Richardson P."/>
        </authorList>
    </citation>
    <scope>NUCLEOTIDE SEQUENCE [LARGE SCALE GENOMIC DNA]</scope>
    <source>
        <strain>ymp</strain>
    </source>
</reference>
<proteinExistence type="inferred from homology"/>
<keyword id="KW-0963">Cytoplasm</keyword>
<keyword id="KW-0342">GTP-binding</keyword>
<keyword id="KW-0547">Nucleotide-binding</keyword>
<keyword id="KW-0648">Protein biosynthesis</keyword>